<keyword id="KW-0067">ATP-binding</keyword>
<keyword id="KW-0963">Cytoplasm</keyword>
<keyword id="KW-0418">Kinase</keyword>
<keyword id="KW-0545">Nucleotide biosynthesis</keyword>
<keyword id="KW-0547">Nucleotide-binding</keyword>
<keyword id="KW-1185">Reference proteome</keyword>
<keyword id="KW-0808">Transferase</keyword>
<reference key="1">
    <citation type="submission" date="1998-05" db="EMBL/GenBank/DDBJ databases">
        <title>Adenylate kinase from Yersinia pestis and Escherichia coli: structural relatedness and differences linked to growth properties of these two organisms.</title>
        <authorList>
            <person name="Munier-Lehmann H."/>
        </authorList>
    </citation>
    <scope>NUCLEOTIDE SEQUENCE [GENOMIC DNA]</scope>
</reference>
<reference key="2">
    <citation type="journal article" date="2001" name="Nature">
        <title>Genome sequence of Yersinia pestis, the causative agent of plague.</title>
        <authorList>
            <person name="Parkhill J."/>
            <person name="Wren B.W."/>
            <person name="Thomson N.R."/>
            <person name="Titball R.W."/>
            <person name="Holden M.T.G."/>
            <person name="Prentice M.B."/>
            <person name="Sebaihia M."/>
            <person name="James K.D."/>
            <person name="Churcher C.M."/>
            <person name="Mungall K.L."/>
            <person name="Baker S."/>
            <person name="Basham D."/>
            <person name="Bentley S.D."/>
            <person name="Brooks K."/>
            <person name="Cerdeno-Tarraga A.-M."/>
            <person name="Chillingworth T."/>
            <person name="Cronin A."/>
            <person name="Davies R.M."/>
            <person name="Davis P."/>
            <person name="Dougan G."/>
            <person name="Feltwell T."/>
            <person name="Hamlin N."/>
            <person name="Holroyd S."/>
            <person name="Jagels K."/>
            <person name="Karlyshev A.V."/>
            <person name="Leather S."/>
            <person name="Moule S."/>
            <person name="Oyston P.C.F."/>
            <person name="Quail M.A."/>
            <person name="Rutherford K.M."/>
            <person name="Simmonds M."/>
            <person name="Skelton J."/>
            <person name="Stevens K."/>
            <person name="Whitehead S."/>
            <person name="Barrell B.G."/>
        </authorList>
    </citation>
    <scope>NUCLEOTIDE SEQUENCE [LARGE SCALE GENOMIC DNA]</scope>
    <source>
        <strain>CO-92 / Biovar Orientalis</strain>
    </source>
</reference>
<reference key="3">
    <citation type="journal article" date="2002" name="J. Bacteriol.">
        <title>Genome sequence of Yersinia pestis KIM.</title>
        <authorList>
            <person name="Deng W."/>
            <person name="Burland V."/>
            <person name="Plunkett G. III"/>
            <person name="Boutin A."/>
            <person name="Mayhew G.F."/>
            <person name="Liss P."/>
            <person name="Perna N.T."/>
            <person name="Rose D.J."/>
            <person name="Mau B."/>
            <person name="Zhou S."/>
            <person name="Schwartz D.C."/>
            <person name="Fetherston J.D."/>
            <person name="Lindler L.E."/>
            <person name="Brubaker R.R."/>
            <person name="Plano G.V."/>
            <person name="Straley S.C."/>
            <person name="McDonough K.A."/>
            <person name="Nilles M.L."/>
            <person name="Matson J.S."/>
            <person name="Blattner F.R."/>
            <person name="Perry R.D."/>
        </authorList>
    </citation>
    <scope>NUCLEOTIDE SEQUENCE [LARGE SCALE GENOMIC DNA]</scope>
    <source>
        <strain>KIM10+ / Biovar Mediaevalis</strain>
    </source>
</reference>
<reference key="4">
    <citation type="journal article" date="2004" name="DNA Res.">
        <title>Complete genome sequence of Yersinia pestis strain 91001, an isolate avirulent to humans.</title>
        <authorList>
            <person name="Song Y."/>
            <person name="Tong Z."/>
            <person name="Wang J."/>
            <person name="Wang L."/>
            <person name="Guo Z."/>
            <person name="Han Y."/>
            <person name="Zhang J."/>
            <person name="Pei D."/>
            <person name="Zhou D."/>
            <person name="Qin H."/>
            <person name="Pang X."/>
            <person name="Han Y."/>
            <person name="Zhai J."/>
            <person name="Li M."/>
            <person name="Cui B."/>
            <person name="Qi Z."/>
            <person name="Jin L."/>
            <person name="Dai R."/>
            <person name="Chen F."/>
            <person name="Li S."/>
            <person name="Ye C."/>
            <person name="Du Z."/>
            <person name="Lin W."/>
            <person name="Wang J."/>
            <person name="Yu J."/>
            <person name="Yang H."/>
            <person name="Wang J."/>
            <person name="Huang P."/>
            <person name="Yang R."/>
        </authorList>
    </citation>
    <scope>NUCLEOTIDE SEQUENCE [LARGE SCALE GENOMIC DNA]</scope>
    <source>
        <strain>91001 / Biovar Mediaevalis</strain>
    </source>
</reference>
<proteinExistence type="inferred from homology"/>
<gene>
    <name evidence="1" type="primary">adk</name>
    <name type="ordered locus">YPO3118</name>
    <name type="ordered locus">y1065</name>
    <name type="ordered locus">YP_0812</name>
</gene>
<accession>O69172</accession>
<accession>Q0WCG2</accession>
<dbReference type="EC" id="2.7.4.3" evidence="1"/>
<dbReference type="EMBL" id="AF065382">
    <property type="protein sequence ID" value="AAC17436.1"/>
    <property type="molecule type" value="Genomic_DNA"/>
</dbReference>
<dbReference type="EMBL" id="AL590842">
    <property type="protein sequence ID" value="CAL21714.1"/>
    <property type="molecule type" value="Genomic_DNA"/>
</dbReference>
<dbReference type="EMBL" id="AE009952">
    <property type="protein sequence ID" value="AAM84646.1"/>
    <property type="molecule type" value="Genomic_DNA"/>
</dbReference>
<dbReference type="EMBL" id="AE017042">
    <property type="protein sequence ID" value="AAS61077.1"/>
    <property type="molecule type" value="Genomic_DNA"/>
</dbReference>
<dbReference type="PIR" id="AG0378">
    <property type="entry name" value="AG0378"/>
</dbReference>
<dbReference type="RefSeq" id="WP_002208600.1">
    <property type="nucleotide sequence ID" value="NZ_WUCM01000009.1"/>
</dbReference>
<dbReference type="RefSeq" id="YP_002348026.1">
    <property type="nucleotide sequence ID" value="NC_003143.1"/>
</dbReference>
<dbReference type="SMR" id="O69172"/>
<dbReference type="STRING" id="214092.YPO3118"/>
<dbReference type="PaxDb" id="214092-YPO3118"/>
<dbReference type="DNASU" id="1146012"/>
<dbReference type="EnsemblBacteria" id="AAS61077">
    <property type="protein sequence ID" value="AAS61077"/>
    <property type="gene ID" value="YP_0812"/>
</dbReference>
<dbReference type="GeneID" id="57975593"/>
<dbReference type="KEGG" id="ype:YPO3118"/>
<dbReference type="KEGG" id="ypk:y1065"/>
<dbReference type="KEGG" id="ypm:YP_0812"/>
<dbReference type="PATRIC" id="fig|214092.21.peg.3573"/>
<dbReference type="eggNOG" id="COG0563">
    <property type="taxonomic scope" value="Bacteria"/>
</dbReference>
<dbReference type="HOGENOM" id="CLU_032354_1_2_6"/>
<dbReference type="OMA" id="VYHEQTA"/>
<dbReference type="OrthoDB" id="9805030at2"/>
<dbReference type="UniPathway" id="UPA00588">
    <property type="reaction ID" value="UER00649"/>
</dbReference>
<dbReference type="Proteomes" id="UP000000815">
    <property type="component" value="Chromosome"/>
</dbReference>
<dbReference type="Proteomes" id="UP000001019">
    <property type="component" value="Chromosome"/>
</dbReference>
<dbReference type="Proteomes" id="UP000002490">
    <property type="component" value="Chromosome"/>
</dbReference>
<dbReference type="GO" id="GO:0005737">
    <property type="term" value="C:cytoplasm"/>
    <property type="evidence" value="ECO:0000318"/>
    <property type="project" value="GO_Central"/>
</dbReference>
<dbReference type="GO" id="GO:0005829">
    <property type="term" value="C:cytosol"/>
    <property type="evidence" value="ECO:0000318"/>
    <property type="project" value="GO_Central"/>
</dbReference>
<dbReference type="GO" id="GO:0004017">
    <property type="term" value="F:adenylate kinase activity"/>
    <property type="evidence" value="ECO:0000318"/>
    <property type="project" value="GO_Central"/>
</dbReference>
<dbReference type="GO" id="GO:0005524">
    <property type="term" value="F:ATP binding"/>
    <property type="evidence" value="ECO:0007669"/>
    <property type="project" value="UniProtKB-UniRule"/>
</dbReference>
<dbReference type="GO" id="GO:0004550">
    <property type="term" value="F:nucleoside diphosphate kinase activity"/>
    <property type="evidence" value="ECO:0000318"/>
    <property type="project" value="GO_Central"/>
</dbReference>
<dbReference type="GO" id="GO:0044209">
    <property type="term" value="P:AMP salvage"/>
    <property type="evidence" value="ECO:0007669"/>
    <property type="project" value="UniProtKB-UniRule"/>
</dbReference>
<dbReference type="GO" id="GO:0009132">
    <property type="term" value="P:nucleoside diphosphate metabolic process"/>
    <property type="evidence" value="ECO:0000318"/>
    <property type="project" value="GO_Central"/>
</dbReference>
<dbReference type="GO" id="GO:0009123">
    <property type="term" value="P:nucleoside monophosphate metabolic process"/>
    <property type="evidence" value="ECO:0000318"/>
    <property type="project" value="GO_Central"/>
</dbReference>
<dbReference type="CDD" id="cd01428">
    <property type="entry name" value="ADK"/>
    <property type="match status" value="1"/>
</dbReference>
<dbReference type="FunFam" id="3.40.50.300:FF:000106">
    <property type="entry name" value="Adenylate kinase mitochondrial"/>
    <property type="match status" value="1"/>
</dbReference>
<dbReference type="Gene3D" id="3.40.50.300">
    <property type="entry name" value="P-loop containing nucleotide triphosphate hydrolases"/>
    <property type="match status" value="1"/>
</dbReference>
<dbReference type="HAMAP" id="MF_00235">
    <property type="entry name" value="Adenylate_kinase_Adk"/>
    <property type="match status" value="1"/>
</dbReference>
<dbReference type="InterPro" id="IPR006259">
    <property type="entry name" value="Adenyl_kin_sub"/>
</dbReference>
<dbReference type="InterPro" id="IPR000850">
    <property type="entry name" value="Adenylat/UMP-CMP_kin"/>
</dbReference>
<dbReference type="InterPro" id="IPR033690">
    <property type="entry name" value="Adenylat_kinase_CS"/>
</dbReference>
<dbReference type="InterPro" id="IPR007862">
    <property type="entry name" value="Adenylate_kinase_lid-dom"/>
</dbReference>
<dbReference type="InterPro" id="IPR027417">
    <property type="entry name" value="P-loop_NTPase"/>
</dbReference>
<dbReference type="NCBIfam" id="TIGR01351">
    <property type="entry name" value="adk"/>
    <property type="match status" value="1"/>
</dbReference>
<dbReference type="NCBIfam" id="NF001379">
    <property type="entry name" value="PRK00279.1-1"/>
    <property type="match status" value="1"/>
</dbReference>
<dbReference type="NCBIfam" id="NF001380">
    <property type="entry name" value="PRK00279.1-2"/>
    <property type="match status" value="1"/>
</dbReference>
<dbReference type="NCBIfam" id="NF001381">
    <property type="entry name" value="PRK00279.1-3"/>
    <property type="match status" value="1"/>
</dbReference>
<dbReference type="NCBIfam" id="NF011100">
    <property type="entry name" value="PRK14527.1"/>
    <property type="match status" value="1"/>
</dbReference>
<dbReference type="PANTHER" id="PTHR23359">
    <property type="entry name" value="NUCLEOTIDE KINASE"/>
    <property type="match status" value="1"/>
</dbReference>
<dbReference type="Pfam" id="PF00406">
    <property type="entry name" value="ADK"/>
    <property type="match status" value="1"/>
</dbReference>
<dbReference type="Pfam" id="PF05191">
    <property type="entry name" value="ADK_lid"/>
    <property type="match status" value="1"/>
</dbReference>
<dbReference type="PRINTS" id="PR00094">
    <property type="entry name" value="ADENYLTKNASE"/>
</dbReference>
<dbReference type="SUPFAM" id="SSF52540">
    <property type="entry name" value="P-loop containing nucleoside triphosphate hydrolases"/>
    <property type="match status" value="1"/>
</dbReference>
<dbReference type="PROSITE" id="PS00113">
    <property type="entry name" value="ADENYLATE_KINASE"/>
    <property type="match status" value="1"/>
</dbReference>
<feature type="chain" id="PRO_0000158894" description="Adenylate kinase">
    <location>
        <begin position="1"/>
        <end position="214"/>
    </location>
</feature>
<feature type="region of interest" description="NMP" evidence="1">
    <location>
        <begin position="30"/>
        <end position="59"/>
    </location>
</feature>
<feature type="region of interest" description="LID">
    <location>
        <begin position="122"/>
        <end position="159"/>
    </location>
</feature>
<feature type="binding site" evidence="1">
    <location>
        <begin position="10"/>
        <end position="15"/>
    </location>
    <ligand>
        <name>ATP</name>
        <dbReference type="ChEBI" id="CHEBI:30616"/>
    </ligand>
</feature>
<feature type="binding site" evidence="1">
    <location>
        <position position="31"/>
    </location>
    <ligand>
        <name>AMP</name>
        <dbReference type="ChEBI" id="CHEBI:456215"/>
    </ligand>
</feature>
<feature type="binding site" evidence="1">
    <location>
        <position position="36"/>
    </location>
    <ligand>
        <name>AMP</name>
        <dbReference type="ChEBI" id="CHEBI:456215"/>
    </ligand>
</feature>
<feature type="binding site" evidence="1">
    <location>
        <begin position="57"/>
        <end position="59"/>
    </location>
    <ligand>
        <name>AMP</name>
        <dbReference type="ChEBI" id="CHEBI:456215"/>
    </ligand>
</feature>
<feature type="binding site" evidence="1">
    <location>
        <begin position="85"/>
        <end position="88"/>
    </location>
    <ligand>
        <name>AMP</name>
        <dbReference type="ChEBI" id="CHEBI:456215"/>
    </ligand>
</feature>
<feature type="binding site" evidence="1">
    <location>
        <position position="92"/>
    </location>
    <ligand>
        <name>AMP</name>
        <dbReference type="ChEBI" id="CHEBI:456215"/>
    </ligand>
</feature>
<feature type="binding site" evidence="1">
    <location>
        <position position="123"/>
    </location>
    <ligand>
        <name>ATP</name>
        <dbReference type="ChEBI" id="CHEBI:30616"/>
    </ligand>
</feature>
<feature type="binding site" evidence="1">
    <location>
        <begin position="132"/>
        <end position="133"/>
    </location>
    <ligand>
        <name>ATP</name>
        <dbReference type="ChEBI" id="CHEBI:30616"/>
    </ligand>
</feature>
<feature type="binding site" evidence="1">
    <location>
        <position position="156"/>
    </location>
    <ligand>
        <name>AMP</name>
        <dbReference type="ChEBI" id="CHEBI:456215"/>
    </ligand>
</feature>
<feature type="binding site" evidence="1">
    <location>
        <position position="167"/>
    </location>
    <ligand>
        <name>AMP</name>
        <dbReference type="ChEBI" id="CHEBI:456215"/>
    </ligand>
</feature>
<feature type="binding site" evidence="1">
    <location>
        <position position="200"/>
    </location>
    <ligand>
        <name>ATP</name>
        <dbReference type="ChEBI" id="CHEBI:30616"/>
    </ligand>
</feature>
<name>KAD_YERPE</name>
<organism>
    <name type="scientific">Yersinia pestis</name>
    <dbReference type="NCBI Taxonomy" id="632"/>
    <lineage>
        <taxon>Bacteria</taxon>
        <taxon>Pseudomonadati</taxon>
        <taxon>Pseudomonadota</taxon>
        <taxon>Gammaproteobacteria</taxon>
        <taxon>Enterobacterales</taxon>
        <taxon>Yersiniaceae</taxon>
        <taxon>Yersinia</taxon>
    </lineage>
</organism>
<comment type="function">
    <text evidence="1">Catalyzes the reversible transfer of the terminal phosphate group between ATP and AMP. Plays an important role in cellular energy homeostasis and in adenine nucleotide metabolism.</text>
</comment>
<comment type="catalytic activity">
    <reaction evidence="1">
        <text>AMP + ATP = 2 ADP</text>
        <dbReference type="Rhea" id="RHEA:12973"/>
        <dbReference type="ChEBI" id="CHEBI:30616"/>
        <dbReference type="ChEBI" id="CHEBI:456215"/>
        <dbReference type="ChEBI" id="CHEBI:456216"/>
        <dbReference type="EC" id="2.7.4.3"/>
    </reaction>
</comment>
<comment type="pathway">
    <text evidence="1">Purine metabolism; AMP biosynthesis via salvage pathway; AMP from ADP: step 1/1.</text>
</comment>
<comment type="subunit">
    <text evidence="1">Monomer.</text>
</comment>
<comment type="subcellular location">
    <subcellularLocation>
        <location evidence="1">Cytoplasm</location>
    </subcellularLocation>
</comment>
<comment type="domain">
    <text evidence="1">Consists of three domains, a large central CORE domain and two small peripheral domains, NMPbind and LID, which undergo movements during catalysis. The LID domain closes over the site of phosphoryl transfer upon ATP binding. Assembling and dissambling the active center during each catalytic cycle provides an effective means to prevent ATP hydrolysis.</text>
</comment>
<comment type="similarity">
    <text evidence="1">Belongs to the adenylate kinase family.</text>
</comment>
<evidence type="ECO:0000255" key="1">
    <source>
        <dbReference type="HAMAP-Rule" id="MF_00235"/>
    </source>
</evidence>
<sequence length="214" mass="23672">MRIILLGAPGAGKGTQAQFIMEKYGIPQISTGDMLRAAVKAGSELGLKAKEIMDAGKLVTDELVIALVKERITQEDCRDGFLLDGFPRTIPQADAMKEAGIKVDYVLEFDVPDELIVERIVGRRVHAASGRVYHVKFNPPKVEDKDDVTGEELTIRKDDQEATVRKRLIEYHQQTAPLVSYYHKEADAGNTQYFKLDGTRNVAEVSAELATILG</sequence>
<protein>
    <recommendedName>
        <fullName evidence="1">Adenylate kinase</fullName>
        <shortName evidence="1">AK</shortName>
        <ecNumber evidence="1">2.7.4.3</ecNumber>
    </recommendedName>
    <alternativeName>
        <fullName evidence="1">ATP-AMP transphosphorylase</fullName>
    </alternativeName>
    <alternativeName>
        <fullName evidence="1">ATP:AMP phosphotransferase</fullName>
    </alternativeName>
    <alternativeName>
        <fullName evidence="1">Adenylate monophosphate kinase</fullName>
    </alternativeName>
</protein>